<feature type="chain" id="PRO_0000076686" description="Iron-responsive element-binding protein 2">
    <location>
        <begin position="1"/>
        <end position="963"/>
    </location>
</feature>
<feature type="binding site" evidence="1">
    <location>
        <position position="512"/>
    </location>
    <ligand>
        <name>[4Fe-4S] cluster</name>
        <dbReference type="ChEBI" id="CHEBI:49883"/>
    </ligand>
</feature>
<feature type="binding site" evidence="1">
    <location>
        <position position="578"/>
    </location>
    <ligand>
        <name>[4Fe-4S] cluster</name>
        <dbReference type="ChEBI" id="CHEBI:49883"/>
    </ligand>
</feature>
<feature type="binding site" evidence="1">
    <location>
        <position position="581"/>
    </location>
    <ligand>
        <name>[4Fe-4S] cluster</name>
        <dbReference type="ChEBI" id="CHEBI:49883"/>
    </ligand>
</feature>
<feature type="sequence conflict" description="In Ref. 1; AAA79927." evidence="4" ref="1">
    <original>V</original>
    <variation>M</variation>
    <location>
        <position position="107"/>
    </location>
</feature>
<feature type="sequence conflict" description="In Ref. 1; AAA79927." evidence="4" ref="1">
    <original>V</original>
    <variation>A</variation>
    <location>
        <position position="602"/>
    </location>
</feature>
<feature type="sequence conflict" description="In Ref. 1; AAA79927." evidence="4" ref="1">
    <original>S</original>
    <variation>R</variation>
    <location>
        <position position="765"/>
    </location>
</feature>
<keyword id="KW-0004">4Fe-4S</keyword>
<keyword id="KW-0963">Cytoplasm</keyword>
<keyword id="KW-0408">Iron</keyword>
<keyword id="KW-0411">Iron-sulfur</keyword>
<keyword id="KW-0479">Metal-binding</keyword>
<keyword id="KW-1185">Reference proteome</keyword>
<keyword id="KW-0694">RNA-binding</keyword>
<keyword id="KW-0832">Ubl conjugation</keyword>
<proteinExistence type="evidence at protein level"/>
<dbReference type="EMBL" id="U20181">
    <property type="protein sequence ID" value="AAA79927.1"/>
    <property type="molecule type" value="mRNA"/>
</dbReference>
<dbReference type="EMBL" id="BC081798">
    <property type="protein sequence ID" value="AAH81798.1"/>
    <property type="molecule type" value="mRNA"/>
</dbReference>
<dbReference type="PIR" id="A57238">
    <property type="entry name" value="A57238"/>
</dbReference>
<dbReference type="RefSeq" id="NP_074054.2">
    <property type="nucleotide sequence ID" value="NM_022863.2"/>
</dbReference>
<dbReference type="SMR" id="Q62751"/>
<dbReference type="FunCoup" id="Q62751">
    <property type="interactions" value="1405"/>
</dbReference>
<dbReference type="STRING" id="10116.ENSRNOP00000070223"/>
<dbReference type="iPTMnet" id="Q62751"/>
<dbReference type="PhosphoSitePlus" id="Q62751"/>
<dbReference type="PaxDb" id="10116-ENSRNOP00000017900"/>
<dbReference type="Ensembl" id="ENSRNOT00000017900.5">
    <property type="protein sequence ID" value="ENSRNOP00000017900.4"/>
    <property type="gene ID" value="ENSRNOG00000013271.6"/>
</dbReference>
<dbReference type="GeneID" id="64831"/>
<dbReference type="KEGG" id="rno:64831"/>
<dbReference type="UCSC" id="RGD:621539">
    <property type="organism name" value="rat"/>
</dbReference>
<dbReference type="AGR" id="RGD:621539"/>
<dbReference type="CTD" id="3658"/>
<dbReference type="RGD" id="621539">
    <property type="gene designation" value="Ireb2"/>
</dbReference>
<dbReference type="eggNOG" id="KOG0452">
    <property type="taxonomic scope" value="Eukaryota"/>
</dbReference>
<dbReference type="GeneTree" id="ENSGT00940000157796"/>
<dbReference type="HOGENOM" id="CLU_013476_2_1_1"/>
<dbReference type="InParanoid" id="Q62751"/>
<dbReference type="PhylomeDB" id="Q62751"/>
<dbReference type="TreeFam" id="TF313476"/>
<dbReference type="Reactome" id="R-RNO-917937">
    <property type="pathway name" value="Iron uptake and transport"/>
</dbReference>
<dbReference type="PRO" id="PR:Q62751"/>
<dbReference type="Proteomes" id="UP000002494">
    <property type="component" value="Chromosome 8"/>
</dbReference>
<dbReference type="Bgee" id="ENSRNOG00000013271">
    <property type="expression patterns" value="Expressed in duodenum and 18 other cell types or tissues"/>
</dbReference>
<dbReference type="ExpressionAtlas" id="Q62751">
    <property type="expression patterns" value="baseline and differential"/>
</dbReference>
<dbReference type="GO" id="GO:0030424">
    <property type="term" value="C:axon"/>
    <property type="evidence" value="ECO:0000314"/>
    <property type="project" value="RGD"/>
</dbReference>
<dbReference type="GO" id="GO:0005737">
    <property type="term" value="C:cytoplasm"/>
    <property type="evidence" value="ECO:0000266"/>
    <property type="project" value="RGD"/>
</dbReference>
<dbReference type="GO" id="GO:0005829">
    <property type="term" value="C:cytosol"/>
    <property type="evidence" value="ECO:0000266"/>
    <property type="project" value="RGD"/>
</dbReference>
<dbReference type="GO" id="GO:0043025">
    <property type="term" value="C:neuronal cell body"/>
    <property type="evidence" value="ECO:0000314"/>
    <property type="project" value="RGD"/>
</dbReference>
<dbReference type="GO" id="GO:0051539">
    <property type="term" value="F:4 iron, 4 sulfur cluster binding"/>
    <property type="evidence" value="ECO:0000314"/>
    <property type="project" value="UniProtKB"/>
</dbReference>
<dbReference type="GO" id="GO:0003994">
    <property type="term" value="F:aconitate hydratase activity"/>
    <property type="evidence" value="ECO:0000318"/>
    <property type="project" value="GO_Central"/>
</dbReference>
<dbReference type="GO" id="GO:0030350">
    <property type="term" value="F:iron-responsive element binding"/>
    <property type="evidence" value="ECO:0000314"/>
    <property type="project" value="UniProtKB"/>
</dbReference>
<dbReference type="GO" id="GO:0046872">
    <property type="term" value="F:metal ion binding"/>
    <property type="evidence" value="ECO:0007669"/>
    <property type="project" value="UniProtKB-KW"/>
</dbReference>
<dbReference type="GO" id="GO:0000900">
    <property type="term" value="F:mRNA regulatory element binding translation repressor activity"/>
    <property type="evidence" value="ECO:0000266"/>
    <property type="project" value="RGD"/>
</dbReference>
<dbReference type="GO" id="GO:0001069">
    <property type="term" value="F:regulatory region RNA binding"/>
    <property type="evidence" value="ECO:0000353"/>
    <property type="project" value="RGD"/>
</dbReference>
<dbReference type="GO" id="GO:0003723">
    <property type="term" value="F:RNA binding"/>
    <property type="evidence" value="ECO:0000314"/>
    <property type="project" value="RGD"/>
</dbReference>
<dbReference type="GO" id="GO:0071364">
    <property type="term" value="P:cellular response to epidermal growth factor stimulus"/>
    <property type="evidence" value="ECO:0000314"/>
    <property type="project" value="RGD"/>
</dbReference>
<dbReference type="GO" id="GO:0071456">
    <property type="term" value="P:cellular response to hypoxia"/>
    <property type="evidence" value="ECO:0000314"/>
    <property type="project" value="RGD"/>
</dbReference>
<dbReference type="GO" id="GO:0071283">
    <property type="term" value="P:cellular response to iron(III) ion"/>
    <property type="evidence" value="ECO:0000314"/>
    <property type="project" value="RGD"/>
</dbReference>
<dbReference type="GO" id="GO:0071287">
    <property type="term" value="P:cellular response to manganese ion"/>
    <property type="evidence" value="ECO:0000314"/>
    <property type="project" value="RGD"/>
</dbReference>
<dbReference type="GO" id="GO:0072705">
    <property type="term" value="P:cellular response to mercaptoethanol"/>
    <property type="evidence" value="ECO:0000314"/>
    <property type="project" value="RGD"/>
</dbReference>
<dbReference type="GO" id="GO:0071300">
    <property type="term" value="P:cellular response to retinoic acid"/>
    <property type="evidence" value="ECO:0000270"/>
    <property type="project" value="RGD"/>
</dbReference>
<dbReference type="GO" id="GO:0034101">
    <property type="term" value="P:erythrocyte homeostasis"/>
    <property type="evidence" value="ECO:0000266"/>
    <property type="project" value="RGD"/>
</dbReference>
<dbReference type="GO" id="GO:0050892">
    <property type="term" value="P:intestinal absorption"/>
    <property type="evidence" value="ECO:0000266"/>
    <property type="project" value="RGD"/>
</dbReference>
<dbReference type="GO" id="GO:0006879">
    <property type="term" value="P:intracellular iron ion homeostasis"/>
    <property type="evidence" value="ECO:0000250"/>
    <property type="project" value="UniProtKB"/>
</dbReference>
<dbReference type="GO" id="GO:0060586">
    <property type="term" value="P:multicellular organismal-level iron ion homeostasis"/>
    <property type="evidence" value="ECO:0000266"/>
    <property type="project" value="RGD"/>
</dbReference>
<dbReference type="GO" id="GO:0017148">
    <property type="term" value="P:negative regulation of translation"/>
    <property type="evidence" value="ECO:0000314"/>
    <property type="project" value="RGD"/>
</dbReference>
<dbReference type="GO" id="GO:0030316">
    <property type="term" value="P:osteoclast differentiation"/>
    <property type="evidence" value="ECO:0000266"/>
    <property type="project" value="RGD"/>
</dbReference>
<dbReference type="GO" id="GO:0009791">
    <property type="term" value="P:post-embryonic development"/>
    <property type="evidence" value="ECO:0000266"/>
    <property type="project" value="RGD"/>
</dbReference>
<dbReference type="GO" id="GO:0006782">
    <property type="term" value="P:protoporphyrinogen IX biosynthetic process"/>
    <property type="evidence" value="ECO:0000266"/>
    <property type="project" value="RGD"/>
</dbReference>
<dbReference type="GO" id="GO:0010468">
    <property type="term" value="P:regulation of gene expression"/>
    <property type="evidence" value="ECO:0000266"/>
    <property type="project" value="RGD"/>
</dbReference>
<dbReference type="GO" id="GO:0006417">
    <property type="term" value="P:regulation of translation"/>
    <property type="evidence" value="ECO:0000266"/>
    <property type="project" value="RGD"/>
</dbReference>
<dbReference type="GO" id="GO:0014823">
    <property type="term" value="P:response to activity"/>
    <property type="evidence" value="ECO:0000270"/>
    <property type="project" value="RGD"/>
</dbReference>
<dbReference type="GO" id="GO:0046688">
    <property type="term" value="P:response to copper ion"/>
    <property type="evidence" value="ECO:0000270"/>
    <property type="project" value="RGD"/>
</dbReference>
<dbReference type="GO" id="GO:1990910">
    <property type="term" value="P:response to hypobaric hypoxia"/>
    <property type="evidence" value="ECO:0000270"/>
    <property type="project" value="RGD"/>
</dbReference>
<dbReference type="GO" id="GO:0010040">
    <property type="term" value="P:response to iron(II) ion"/>
    <property type="evidence" value="ECO:0000270"/>
    <property type="project" value="RGD"/>
</dbReference>
<dbReference type="GO" id="GO:0010041">
    <property type="term" value="P:response to iron(III) ion"/>
    <property type="evidence" value="ECO:0000314"/>
    <property type="project" value="RGD"/>
</dbReference>
<dbReference type="GO" id="GO:1904373">
    <property type="term" value="P:response to kainic acid"/>
    <property type="evidence" value="ECO:0000270"/>
    <property type="project" value="RGD"/>
</dbReference>
<dbReference type="GO" id="GO:0032526">
    <property type="term" value="P:response to retinoic acid"/>
    <property type="evidence" value="ECO:0000270"/>
    <property type="project" value="RGD"/>
</dbReference>
<dbReference type="GO" id="GO:0010043">
    <property type="term" value="P:response to zinc ion"/>
    <property type="evidence" value="ECO:0000270"/>
    <property type="project" value="RGD"/>
</dbReference>
<dbReference type="GO" id="GO:0014732">
    <property type="term" value="P:skeletal muscle atrophy"/>
    <property type="evidence" value="ECO:0000270"/>
    <property type="project" value="RGD"/>
</dbReference>
<dbReference type="CDD" id="cd01586">
    <property type="entry name" value="AcnA_IRP"/>
    <property type="match status" value="1"/>
</dbReference>
<dbReference type="CDD" id="cd01580">
    <property type="entry name" value="AcnA_IRP_Swivel"/>
    <property type="match status" value="1"/>
</dbReference>
<dbReference type="FunFam" id="3.30.499.10:FF:000005">
    <property type="entry name" value="cytoplasmic aconitate hydratase"/>
    <property type="match status" value="1"/>
</dbReference>
<dbReference type="FunFam" id="3.30.499.10:FF:000011">
    <property type="entry name" value="Iron-responsive element binding protein 2"/>
    <property type="match status" value="1"/>
</dbReference>
<dbReference type="FunFam" id="3.30.499.10:FF:000012">
    <property type="entry name" value="Iron-responsive element binding protein 2"/>
    <property type="match status" value="1"/>
</dbReference>
<dbReference type="FunFam" id="3.20.19.10:FF:000005">
    <property type="entry name" value="Iron-responsive element-binding protein 2"/>
    <property type="match status" value="1"/>
</dbReference>
<dbReference type="Gene3D" id="6.10.190.10">
    <property type="match status" value="1"/>
</dbReference>
<dbReference type="Gene3D" id="3.30.499.10">
    <property type="entry name" value="Aconitase, domain 3"/>
    <property type="match status" value="3"/>
</dbReference>
<dbReference type="Gene3D" id="3.20.19.10">
    <property type="entry name" value="Aconitase, domain 4"/>
    <property type="match status" value="1"/>
</dbReference>
<dbReference type="InterPro" id="IPR044137">
    <property type="entry name" value="AcnA_IRP_Swivel"/>
</dbReference>
<dbReference type="InterPro" id="IPR015931">
    <property type="entry name" value="Acnase/IPM_dHydase_lsu_aba_1/3"/>
</dbReference>
<dbReference type="InterPro" id="IPR001030">
    <property type="entry name" value="Acoase/IPM_deHydtase_lsu_aba"/>
</dbReference>
<dbReference type="InterPro" id="IPR015928">
    <property type="entry name" value="Aconitase/3IPM_dehydase_swvl"/>
</dbReference>
<dbReference type="InterPro" id="IPR006249">
    <property type="entry name" value="Aconitase/IRP2"/>
</dbReference>
<dbReference type="InterPro" id="IPR018136">
    <property type="entry name" value="Aconitase_4Fe-4S_BS"/>
</dbReference>
<dbReference type="InterPro" id="IPR036008">
    <property type="entry name" value="Aconitase_4Fe-4S_dom"/>
</dbReference>
<dbReference type="InterPro" id="IPR000573">
    <property type="entry name" value="AconitaseA/IPMdHydase_ssu_swvl"/>
</dbReference>
<dbReference type="NCBIfam" id="TIGR01341">
    <property type="entry name" value="aconitase_1"/>
    <property type="match status" value="1"/>
</dbReference>
<dbReference type="NCBIfam" id="NF006757">
    <property type="entry name" value="PRK09277.1"/>
    <property type="match status" value="1"/>
</dbReference>
<dbReference type="NCBIfam" id="NF009520">
    <property type="entry name" value="PRK12881.1"/>
    <property type="match status" value="1"/>
</dbReference>
<dbReference type="PANTHER" id="PTHR11670">
    <property type="entry name" value="ACONITASE/IRON-RESPONSIVE ELEMENT FAMILY MEMBER"/>
    <property type="match status" value="1"/>
</dbReference>
<dbReference type="Pfam" id="PF00330">
    <property type="entry name" value="Aconitase"/>
    <property type="match status" value="2"/>
</dbReference>
<dbReference type="Pfam" id="PF00694">
    <property type="entry name" value="Aconitase_C"/>
    <property type="match status" value="1"/>
</dbReference>
<dbReference type="PRINTS" id="PR00415">
    <property type="entry name" value="ACONITASE"/>
</dbReference>
<dbReference type="SUPFAM" id="SSF53732">
    <property type="entry name" value="Aconitase iron-sulfur domain"/>
    <property type="match status" value="1"/>
</dbReference>
<dbReference type="SUPFAM" id="SSF52016">
    <property type="entry name" value="LeuD/IlvD-like"/>
    <property type="match status" value="1"/>
</dbReference>
<dbReference type="PROSITE" id="PS00450">
    <property type="entry name" value="ACONITASE_1"/>
    <property type="match status" value="1"/>
</dbReference>
<dbReference type="PROSITE" id="PS01244">
    <property type="entry name" value="ACONITASE_2"/>
    <property type="match status" value="1"/>
</dbReference>
<sequence>MDSPSAGYTFEYLIETLNGSSQKKFFNVPKLGGTKYDILPYSIRVLLEAAVRNCDGFLMKKEDVINILDWKTKQSNVEVPFFPARVVLQDFTGIPAMVDFAAMREAVKTLGGDPKKVHPACPTDLTVDHSLQIDFSKCAIQNAPNPGGGDLQKAGKLSPLKVQPKKLPCRGQTTCRGSCDSGELSRNSGTFSSQIENTPVLCPFHLQPVPEPETVLKNQEVEFGRNRERLQFFKWSSGAFKNVAVIPPGTGMAHQVNLEHLSRVVFEEADLLFPDSVIGTDSHITMVNGLGILGWGVGGIETEAVMLGLPVTLTLPEVVGCELTGSSNAFVTSIDIVLGITKHLRQVGVAGKFVEFFGSGVSQLSIVDRTTIANMCPEYGAILSFFPVDNVTLRHLEHTGFDKTKLESMEEYLKAVKLFRNDENSSEPEYSQVIQINLNSIVASVSGPKRPQDRVAVTDMKSDFQACLNEKVGFKGFQVAAEKQSDTVSVRYDGSEYKLSHGSVVIAAVISCTNNCNPSVMLAAGLLAKKAVETGLRVKPYIRTSLSPGSGMVTHYLSSSGVLPYLSKLGFEIVGYGCSTCVGNTAPLSEAILNAVKQGDLVTCGVLSGNKNFEGRLCDCVRANYLASPPLVVAYAIAGTVNIDFQTEPLGTDSTGKNIYLHDIWPSREEVHQIEEEHVILSMFKALKEKVEMGNKRWNSLDAPDSVLFPWDVKSTYIRCPSFFDKLTKEPAASQPIENAHVLLYLGDSVTTDHISPAGSIARSSAAAKYLTNRGLTPREFNSYGARRGNDAVMTRGTFANIKLFNKFIGKPAPKTIHFPSGQTLDVFEAAELYQKEGIPLIILAGKKYGSGNSRDWAAKGPYLLGVKAVLAESYEKIHKDHLIGIGIAPLEFLPGENADSLGLSGREVFSLSFPEELFPGITLNIKTSTGKEFSVIAAFENDVEITLYKHGGLLNFVARKFL</sequence>
<reference key="1">
    <citation type="journal article" date="1995" name="J. Biol. Chem.">
        <title>Characterization and expression of iron regulatory protein 2 (IRP2). Presence of multiple IRP2 transcripts regulated by intracellular iron levels.</title>
        <authorList>
            <person name="Guo B."/>
            <person name="Brown F.M."/>
            <person name="Phillips J.D."/>
            <person name="Yu Y."/>
            <person name="Leibold E.A."/>
        </authorList>
    </citation>
    <scope>NUCLEOTIDE SEQUENCE [MRNA]</scope>
    <source>
        <strain>Sprague-Dawley</strain>
        <tissue>Liver</tissue>
    </source>
</reference>
<reference key="2">
    <citation type="journal article" date="2004" name="Genome Res.">
        <title>The status, quality, and expansion of the NIH full-length cDNA project: the Mammalian Gene Collection (MGC).</title>
        <authorList>
            <consortium name="The MGC Project Team"/>
        </authorList>
    </citation>
    <scope>NUCLEOTIDE SEQUENCE [LARGE SCALE MRNA]</scope>
    <source>
        <tissue>Testis</tissue>
    </source>
</reference>
<reference key="3">
    <citation type="journal article" date="1995" name="J. Biol. Chem.">
        <title>Iron regulates the intracellular degradation of iron regulatory protein 2 by the proteasome.</title>
        <authorList>
            <person name="Guo B."/>
            <person name="Phillips J.D."/>
            <person name="Yu Y."/>
            <person name="Leibold E.A."/>
        </authorList>
    </citation>
    <scope>COFACTOR</scope>
    <scope>RNA-BINDING</scope>
    <scope>UBIQUITINATION</scope>
</reference>
<reference key="4">
    <citation type="journal article" date="2012" name="Nat. Commun.">
        <title>Quantitative maps of protein phosphorylation sites across 14 different rat organs and tissues.</title>
        <authorList>
            <person name="Lundby A."/>
            <person name="Secher A."/>
            <person name="Lage K."/>
            <person name="Nordsborg N.B."/>
            <person name="Dmytriyev A."/>
            <person name="Lundby C."/>
            <person name="Olsen J.V."/>
        </authorList>
    </citation>
    <scope>IDENTIFICATION BY MASS SPECTROMETRY [LARGE SCALE ANALYSIS]</scope>
</reference>
<evidence type="ECO:0000250" key="1"/>
<evidence type="ECO:0000250" key="2">
    <source>
        <dbReference type="UniProtKB" id="P48200"/>
    </source>
</evidence>
<evidence type="ECO:0000250" key="3">
    <source>
        <dbReference type="UniProtKB" id="Q811J3"/>
    </source>
</evidence>
<evidence type="ECO:0000305" key="4"/>
<gene>
    <name type="primary">Ireb2</name>
    <name type="synonym">Irp2</name>
</gene>
<organism>
    <name type="scientific">Rattus norvegicus</name>
    <name type="common">Rat</name>
    <dbReference type="NCBI Taxonomy" id="10116"/>
    <lineage>
        <taxon>Eukaryota</taxon>
        <taxon>Metazoa</taxon>
        <taxon>Chordata</taxon>
        <taxon>Craniata</taxon>
        <taxon>Vertebrata</taxon>
        <taxon>Euteleostomi</taxon>
        <taxon>Mammalia</taxon>
        <taxon>Eutheria</taxon>
        <taxon>Euarchontoglires</taxon>
        <taxon>Glires</taxon>
        <taxon>Rodentia</taxon>
        <taxon>Myomorpha</taxon>
        <taxon>Muroidea</taxon>
        <taxon>Muridae</taxon>
        <taxon>Murinae</taxon>
        <taxon>Rattus</taxon>
    </lineage>
</organism>
<name>IREB2_RAT</name>
<comment type="function">
    <text evidence="2">RNA-binding protein that binds to iron-responsive elements (IRES), which are stem-loop structures found in the 5'-UTR of ferritin, and delta aminolevulinic acid synthase mRNAs, and in the 3'-UTR of transferrin receptor mRNA. Binding to the IRE element in ferritin results in the repression of its mRNA translation. Binding of the protein to the transferrin receptor mRNA inhibits the degradation of this otherwise rapidly degraded mRNA.</text>
</comment>
<comment type="cofactor">
    <cofactor evidence="1">
        <name>[4Fe-4S] cluster</name>
        <dbReference type="ChEBI" id="CHEBI:49883"/>
    </cofactor>
    <text evidence="1">Binds 1 [4Fe-4S] cluster per subunit. [4Fe-4S]-binding affects RNA-binding activity, thereby inhibiting activity of the protein.</text>
</comment>
<comment type="subunit">
    <text evidence="2 3">Interacts with RBCK1 only in iron-rich conditions. Interacts (when associated with the 4Fe-4S) with FBXL5 (By similarity). Interacts with CIAO1 and CIAO2A (By similarity).</text>
</comment>
<comment type="subcellular location">
    <subcellularLocation>
        <location>Cytoplasm</location>
    </subcellularLocation>
</comment>
<comment type="tissue specificity">
    <text>Ubiquitously expressed in rat tissues, the highest amounts present in skeletal muscle and heart.</text>
</comment>
<comment type="PTM">
    <text evidence="1">Ubiquitinated and degraded by the proteasome in presence of high level of iron and oxygen. Ubiquitinated by a SCF complex containing FBXL5. Upon iron and oxygen depletion FBXL5 is degraded, preventing ubiquitination and allowing its RNA-binding activity (By similarity).</text>
</comment>
<comment type="similarity">
    <text evidence="4">Belongs to the aconitase/IPM isomerase family.</text>
</comment>
<accession>Q62751</accession>
<accession>Q66HL4</accession>
<protein>
    <recommendedName>
        <fullName>Iron-responsive element-binding protein 2</fullName>
        <shortName>IRE-BP 2</shortName>
    </recommendedName>
    <alternativeName>
        <fullName>Iron regulatory protein 2</fullName>
        <shortName>IRP2</shortName>
    </alternativeName>
</protein>